<sequence>MNIDIISVGKVKEKYIKLGIAEFSKRLSAHCKLNIIEVDDLSAAENLSDSEKEIVKDKEAEKIISKIKDSHYVITLEIVGNQLTSEKLAAKIENLTIQGHSNICFVIGGSLGLGKSVLDRSDYALSFSKFTFPHQLMRLILLEQIYRSFRIINNLPYHK</sequence>
<comment type="function">
    <text evidence="1">Specifically methylates the pseudouridine at position 1915 (m3Psi1915) in 23S rRNA.</text>
</comment>
<comment type="catalytic activity">
    <reaction evidence="1">
        <text>pseudouridine(1915) in 23S rRNA + S-adenosyl-L-methionine = N(3)-methylpseudouridine(1915) in 23S rRNA + S-adenosyl-L-homocysteine + H(+)</text>
        <dbReference type="Rhea" id="RHEA:42752"/>
        <dbReference type="Rhea" id="RHEA-COMP:10221"/>
        <dbReference type="Rhea" id="RHEA-COMP:10222"/>
        <dbReference type="ChEBI" id="CHEBI:15378"/>
        <dbReference type="ChEBI" id="CHEBI:57856"/>
        <dbReference type="ChEBI" id="CHEBI:59789"/>
        <dbReference type="ChEBI" id="CHEBI:65314"/>
        <dbReference type="ChEBI" id="CHEBI:74486"/>
        <dbReference type="EC" id="2.1.1.177"/>
    </reaction>
</comment>
<comment type="subunit">
    <text evidence="1">Homodimer.</text>
</comment>
<comment type="subcellular location">
    <subcellularLocation>
        <location evidence="1">Cytoplasm</location>
    </subcellularLocation>
</comment>
<comment type="similarity">
    <text evidence="1">Belongs to the RNA methyltransferase RlmH family.</text>
</comment>
<comment type="sequence caution" evidence="2">
    <conflict type="erroneous initiation">
        <sequence resource="EMBL-CDS" id="BAG08893"/>
    </conflict>
</comment>
<proteinExistence type="inferred from homology"/>
<feature type="chain" id="PRO_0000366597" description="Ribosomal RNA large subunit methyltransferase H">
    <location>
        <begin position="1"/>
        <end position="159"/>
    </location>
</feature>
<feature type="binding site" evidence="1">
    <location>
        <position position="76"/>
    </location>
    <ligand>
        <name>S-adenosyl-L-methionine</name>
        <dbReference type="ChEBI" id="CHEBI:59789"/>
    </ligand>
</feature>
<feature type="binding site" evidence="1">
    <location>
        <position position="108"/>
    </location>
    <ligand>
        <name>S-adenosyl-L-methionine</name>
        <dbReference type="ChEBI" id="CHEBI:59789"/>
    </ligand>
</feature>
<protein>
    <recommendedName>
        <fullName evidence="1">Ribosomal RNA large subunit methyltransferase H</fullName>
        <ecNumber evidence="1">2.1.1.177</ecNumber>
    </recommendedName>
    <alternativeName>
        <fullName evidence="1">23S rRNA (pseudouridine1915-N3)-methyltransferase</fullName>
    </alternativeName>
    <alternativeName>
        <fullName evidence="1">23S rRNA m3Psi1915 methyltransferase</fullName>
    </alternativeName>
    <alternativeName>
        <fullName evidence="1">rRNA (pseudouridine-N3-)-methyltransferase RlmH</fullName>
    </alternativeName>
</protein>
<accession>B0S3F3</accession>
<dbReference type="EC" id="2.1.1.177" evidence="1"/>
<dbReference type="EMBL" id="AP008971">
    <property type="protein sequence ID" value="BAG08893.1"/>
    <property type="status" value="ALT_INIT"/>
    <property type="molecule type" value="Genomic_DNA"/>
</dbReference>
<dbReference type="RefSeq" id="WP_041250629.1">
    <property type="nucleotide sequence ID" value="NC_010376.1"/>
</dbReference>
<dbReference type="SMR" id="B0S3F3"/>
<dbReference type="STRING" id="334413.FMG_1475"/>
<dbReference type="KEGG" id="fma:FMG_1475"/>
<dbReference type="eggNOG" id="COG1576">
    <property type="taxonomic scope" value="Bacteria"/>
</dbReference>
<dbReference type="HOGENOM" id="CLU_100552_0_0_9"/>
<dbReference type="Proteomes" id="UP000001319">
    <property type="component" value="Chromosome"/>
</dbReference>
<dbReference type="GO" id="GO:0005737">
    <property type="term" value="C:cytoplasm"/>
    <property type="evidence" value="ECO:0007669"/>
    <property type="project" value="UniProtKB-SubCell"/>
</dbReference>
<dbReference type="GO" id="GO:0070038">
    <property type="term" value="F:rRNA (pseudouridine-N3-)-methyltransferase activity"/>
    <property type="evidence" value="ECO:0007669"/>
    <property type="project" value="UniProtKB-UniRule"/>
</dbReference>
<dbReference type="CDD" id="cd18081">
    <property type="entry name" value="RlmH-like"/>
    <property type="match status" value="1"/>
</dbReference>
<dbReference type="Gene3D" id="3.40.1280.10">
    <property type="match status" value="1"/>
</dbReference>
<dbReference type="HAMAP" id="MF_00658">
    <property type="entry name" value="23SrRNA_methyltr_H"/>
    <property type="match status" value="1"/>
</dbReference>
<dbReference type="InterPro" id="IPR029028">
    <property type="entry name" value="Alpha/beta_knot_MTases"/>
</dbReference>
<dbReference type="InterPro" id="IPR003742">
    <property type="entry name" value="RlmH-like"/>
</dbReference>
<dbReference type="InterPro" id="IPR029026">
    <property type="entry name" value="tRNA_m1G_MTases_N"/>
</dbReference>
<dbReference type="NCBIfam" id="NF000985">
    <property type="entry name" value="PRK00103.1-3"/>
    <property type="match status" value="1"/>
</dbReference>
<dbReference type="NCBIfam" id="TIGR00246">
    <property type="entry name" value="tRNA_RlmH_YbeA"/>
    <property type="match status" value="1"/>
</dbReference>
<dbReference type="PANTHER" id="PTHR33603">
    <property type="entry name" value="METHYLTRANSFERASE"/>
    <property type="match status" value="1"/>
</dbReference>
<dbReference type="PANTHER" id="PTHR33603:SF1">
    <property type="entry name" value="RIBOSOMAL RNA LARGE SUBUNIT METHYLTRANSFERASE H"/>
    <property type="match status" value="1"/>
</dbReference>
<dbReference type="Pfam" id="PF02590">
    <property type="entry name" value="SPOUT_MTase"/>
    <property type="match status" value="1"/>
</dbReference>
<dbReference type="PIRSF" id="PIRSF004505">
    <property type="entry name" value="MT_bac"/>
    <property type="match status" value="1"/>
</dbReference>
<dbReference type="SUPFAM" id="SSF75217">
    <property type="entry name" value="alpha/beta knot"/>
    <property type="match status" value="1"/>
</dbReference>
<reference key="1">
    <citation type="journal article" date="2008" name="DNA Res.">
        <title>Complete genome sequence of Finegoldia magna, an anaerobic opportunistic pathogen.</title>
        <authorList>
            <person name="Goto T."/>
            <person name="Yamashita A."/>
            <person name="Hirakawa H."/>
            <person name="Matsutani M."/>
            <person name="Todo K."/>
            <person name="Ohshima K."/>
            <person name="Toh H."/>
            <person name="Miyamoto K."/>
            <person name="Kuhara S."/>
            <person name="Hattori M."/>
            <person name="Shimizu T."/>
            <person name="Akimoto S."/>
        </authorList>
    </citation>
    <scope>NUCLEOTIDE SEQUENCE [LARGE SCALE GENOMIC DNA]</scope>
    <source>
        <strain>ATCC 29328 / DSM 20472 / WAL 2508</strain>
    </source>
</reference>
<name>RLMH_FINM2</name>
<gene>
    <name evidence="1" type="primary">rlmH</name>
    <name type="ordered locus">FMG_1475</name>
</gene>
<organism>
    <name type="scientific">Finegoldia magna (strain ATCC 29328 / DSM 20472 / WAL 2508)</name>
    <name type="common">Peptostreptococcus magnus</name>
    <dbReference type="NCBI Taxonomy" id="334413"/>
    <lineage>
        <taxon>Bacteria</taxon>
        <taxon>Bacillati</taxon>
        <taxon>Bacillota</taxon>
        <taxon>Tissierellia</taxon>
        <taxon>Tissierellales</taxon>
        <taxon>Peptoniphilaceae</taxon>
        <taxon>Finegoldia</taxon>
    </lineage>
</organism>
<keyword id="KW-0963">Cytoplasm</keyword>
<keyword id="KW-0489">Methyltransferase</keyword>
<keyword id="KW-1185">Reference proteome</keyword>
<keyword id="KW-0698">rRNA processing</keyword>
<keyword id="KW-0949">S-adenosyl-L-methionine</keyword>
<keyword id="KW-0808">Transferase</keyword>
<evidence type="ECO:0000255" key="1">
    <source>
        <dbReference type="HAMAP-Rule" id="MF_00658"/>
    </source>
</evidence>
<evidence type="ECO:0000305" key="2"/>